<accession>Q76CE6</accession>
<comment type="function">
    <text evidence="2 3">Binds to the surface of ice crystals. Has low thermal hysteresis (TH) activity, which is the ability to lower the freezing point of an aqueous solution below its melting point (PubMed:22645341). The TH activity of this protein is approximately 0.3 degrees Celsius at 11 mM (PubMed:27613857).</text>
</comment>
<comment type="induction">
    <text evidence="4">By low temperatures, 0 degrees Celsius.</text>
</comment>
<comment type="mass spectrometry" mass="21978.0" method="MALDI" evidence="4">
    <text>The measured mass is that of the mature protein.</text>
</comment>
<comment type="similarity">
    <text evidence="7">Belongs to the ice-binding protein family.</text>
</comment>
<sequence length="243" mass="24093">MFSASSLLAVIALAISSVSAAGPSAVPLGTAGNYVILASTGVSTVPQSVITGAVGVSPGTAASLTGFSLILSGTGTFSTSSQVTGQLTGADYGTPTPSILTTAIGDMGTAYINAATRSGPDFLEIYTGALGGTTLLPGLYKWTSSVGASADFTISGTSTDTWIFQIDGTLDVATGKQITLVGGAQAKNIIWVVAGAVNIEVGAKFEGTILAKTAVTFKTGSSLNGRILAQTSVALQSATIVEK</sequence>
<proteinExistence type="evidence at protein level"/>
<protein>
    <recommendedName>
        <fullName evidence="7">Ice-binding protein K3-B1</fullName>
    </recommendedName>
    <alternativeName>
        <fullName evidence="5">Antifreeze protein 6</fullName>
        <shortName evidence="7">AFP6</shortName>
    </alternativeName>
    <alternativeName>
        <fullName evidence="6">TAFP-2</fullName>
    </alternativeName>
    <alternativeName>
        <fullName evidence="5">TisAFP6</fullName>
    </alternativeName>
</protein>
<feature type="signal peptide" evidence="4">
    <location>
        <begin position="1"/>
        <end position="20"/>
    </location>
</feature>
<feature type="chain" id="PRO_5004287146" description="Ice-binding protein K3-B1" evidence="1">
    <location>
        <begin position="21"/>
        <end position="243"/>
    </location>
</feature>
<feature type="site" description="Ice-binding" evidence="8">
    <location>
        <position position="198"/>
    </location>
</feature>
<feature type="mutagenesis site" description="Has 85% thermal hysteresis (TH) activity of that of the wild-type." evidence="2">
    <original>T</original>
    <variation>Y</variation>
    <location>
        <position position="102"/>
    </location>
</feature>
<feature type="mutagenesis site" description="Has 40% thermal hysteresis (TH) activity of that of the wild-type." evidence="2">
    <original>N</original>
    <variation>Y</variation>
    <location>
        <position position="198"/>
    </location>
</feature>
<feature type="mutagenesis site" description="Slight increase in thermal hysteresis (TH) activity (0.48 degrees Celsius) compared with that of the wild-type (0.32 degrees Celsius) at 0.14 mM." evidence="3">
    <original>S</original>
    <variation>A</variation>
    <location>
        <position position="232"/>
    </location>
</feature>
<feature type="mutagenesis site" description="Has 85% thermal hysteresis (TH) activity of that of the wild-type." evidence="2">
    <original>V</original>
    <variation>Y</variation>
    <location>
        <position position="241"/>
    </location>
</feature>
<feature type="helix" evidence="11">
    <location>
        <begin position="29"/>
        <end position="33"/>
    </location>
</feature>
<feature type="strand" evidence="11">
    <location>
        <begin position="35"/>
        <end position="40"/>
    </location>
</feature>
<feature type="strand" evidence="11">
    <location>
        <begin position="42"/>
        <end position="46"/>
    </location>
</feature>
<feature type="strand" evidence="11">
    <location>
        <begin position="49"/>
        <end position="52"/>
    </location>
</feature>
<feature type="strand" evidence="11">
    <location>
        <begin position="54"/>
        <end position="59"/>
    </location>
</feature>
<feature type="helix" evidence="11">
    <location>
        <begin position="61"/>
        <end position="63"/>
    </location>
</feature>
<feature type="strand" evidence="11">
    <location>
        <begin position="64"/>
        <end position="67"/>
    </location>
</feature>
<feature type="strand" evidence="11">
    <location>
        <begin position="78"/>
        <end position="80"/>
    </location>
</feature>
<feature type="strand" evidence="11">
    <location>
        <begin position="83"/>
        <end position="89"/>
    </location>
</feature>
<feature type="helix" evidence="11">
    <location>
        <begin position="96"/>
        <end position="110"/>
    </location>
</feature>
<feature type="turn" evidence="11">
    <location>
        <begin position="113"/>
        <end position="116"/>
    </location>
</feature>
<feature type="strand" evidence="11">
    <location>
        <begin position="121"/>
        <end position="124"/>
    </location>
</feature>
<feature type="helix" evidence="11">
    <location>
        <begin position="125"/>
        <end position="128"/>
    </location>
</feature>
<feature type="strand" evidence="11">
    <location>
        <begin position="137"/>
        <end position="144"/>
    </location>
</feature>
<feature type="strand" evidence="11">
    <location>
        <begin position="146"/>
        <end position="150"/>
    </location>
</feature>
<feature type="strand" evidence="11">
    <location>
        <begin position="152"/>
        <end position="155"/>
    </location>
</feature>
<feature type="strand" evidence="11">
    <location>
        <begin position="162"/>
        <end position="168"/>
    </location>
</feature>
<feature type="strand" evidence="11">
    <location>
        <begin position="170"/>
        <end position="172"/>
    </location>
</feature>
<feature type="strand" evidence="11">
    <location>
        <begin position="177"/>
        <end position="181"/>
    </location>
</feature>
<feature type="helix" evidence="11">
    <location>
        <begin position="186"/>
        <end position="188"/>
    </location>
</feature>
<feature type="strand" evidence="11">
    <location>
        <begin position="189"/>
        <end position="195"/>
    </location>
</feature>
<feature type="strand" evidence="11">
    <location>
        <begin position="197"/>
        <end position="199"/>
    </location>
</feature>
<feature type="strand" evidence="11">
    <location>
        <begin position="204"/>
        <end position="213"/>
    </location>
</feature>
<feature type="strand" evidence="11">
    <location>
        <begin position="215"/>
        <end position="217"/>
    </location>
</feature>
<feature type="strand" evidence="11">
    <location>
        <begin position="222"/>
        <end position="231"/>
    </location>
</feature>
<feature type="strand" evidence="11">
    <location>
        <begin position="233"/>
        <end position="237"/>
    </location>
</feature>
<feature type="strand" evidence="11">
    <location>
        <begin position="239"/>
        <end position="242"/>
    </location>
</feature>
<keyword id="KW-0002">3D-structure</keyword>
<keyword id="KW-0903">Direct protein sequencing</keyword>
<keyword id="KW-0732">Signal</keyword>
<reference key="1">
    <citation type="journal article" date="2003" name="Can. J. Bot.">
        <title>Antifreeze proteins from snow mold fungi.</title>
        <authorList>
            <person name="Hoshino T."/>
            <person name="Kiriaki M."/>
            <person name="Ohgiya S."/>
            <person name="Fujiwara M."/>
            <person name="Kondo H."/>
            <person name="Nishimiya Y."/>
            <person name="Yumoto I."/>
            <person name="Tsuda S."/>
        </authorList>
    </citation>
    <scope>NUCLEOTIDE SEQUENCE [MRNA]</scope>
    <scope>PROTEIN SEQUENCE OF 21-40</scope>
    <scope>INDUCTION</scope>
    <scope>MASS SPECTROMETRY</scope>
    <scope>SIGNAL</scope>
    <source>
        <strain evidence="6">BRB-1</strain>
    </source>
</reference>
<reference key="2">
    <citation type="journal article" date="2016" name="Biochem. J.">
        <title>Hydrophobic ice-binding sites confer hyperactivity of an antifreeze protein from a snow mold fungus.</title>
        <authorList>
            <person name="Cheng J."/>
            <person name="Hanada Y."/>
            <person name="Miura A."/>
            <person name="Tsuda S."/>
            <person name="Kondo H."/>
        </authorList>
    </citation>
    <scope>FUNCTION</scope>
    <scope>MUTAGENESIS OF SER-232</scope>
</reference>
<reference evidence="10" key="3">
    <citation type="journal article" date="2012" name="Proc. Natl. Acad. Sci. U.S.A.">
        <title>Ice-binding site of snow mold fungus antifreeze protein deviates from structural regularity and high conservation.</title>
        <authorList>
            <person name="Kondo H."/>
            <person name="Hanada Y."/>
            <person name="Sugimoto H."/>
            <person name="Hoshino T."/>
            <person name="Garnham C.P."/>
            <person name="Davies P.L."/>
            <person name="Tsuda S."/>
        </authorList>
    </citation>
    <scope>X-RAY CRYSTALLOGRAPHY (0.95 ANGSTROMS) OF 21-243</scope>
    <scope>FUNCTION</scope>
    <scope>SITE</scope>
    <scope>MUTAGENESIS OF THR-102; ASN-198 AND VAL-241</scope>
    <source>
        <strain evidence="5">BRB-1</strain>
    </source>
</reference>
<evidence type="ECO:0000255" key="1"/>
<evidence type="ECO:0000269" key="2">
    <source>
    </source>
</evidence>
<evidence type="ECO:0000269" key="3">
    <source>
    </source>
</evidence>
<evidence type="ECO:0000269" key="4">
    <source ref="1"/>
</evidence>
<evidence type="ECO:0000303" key="5">
    <source>
    </source>
</evidence>
<evidence type="ECO:0000303" key="6">
    <source ref="1"/>
</evidence>
<evidence type="ECO:0000305" key="7"/>
<evidence type="ECO:0000305" key="8">
    <source>
    </source>
</evidence>
<evidence type="ECO:0000312" key="9">
    <source>
        <dbReference type="EMBL" id="BAD02893.1"/>
    </source>
</evidence>
<evidence type="ECO:0007744" key="10">
    <source>
        <dbReference type="PDB" id="3VN3"/>
    </source>
</evidence>
<evidence type="ECO:0007829" key="11">
    <source>
        <dbReference type="PDB" id="3VN3"/>
    </source>
</evidence>
<gene>
    <name evidence="9" type="primary">K3-B1</name>
</gene>
<organism>
    <name type="scientific">Typhula ishikariensis</name>
    <name type="common">Gray snow mold fungus</name>
    <dbReference type="NCBI Taxonomy" id="69361"/>
    <lineage>
        <taxon>Eukaryota</taxon>
        <taxon>Fungi</taxon>
        <taxon>Dikarya</taxon>
        <taxon>Basidiomycota</taxon>
        <taxon>Agaricomycotina</taxon>
        <taxon>Agaricomycetes</taxon>
        <taxon>Agaricomycetidae</taxon>
        <taxon>Agaricales</taxon>
        <taxon>Pleurotineae</taxon>
        <taxon>Typhulaceae</taxon>
        <taxon>Typhula</taxon>
    </lineage>
</organism>
<name>IBPKB_TYPIS</name>
<dbReference type="EMBL" id="AB109744">
    <property type="protein sequence ID" value="BAD02893.1"/>
    <property type="molecule type" value="mRNA"/>
</dbReference>
<dbReference type="PDB" id="3VN3">
    <property type="method" value="X-ray"/>
    <property type="resolution" value="0.95 A"/>
    <property type="chains" value="A/B=21-243"/>
</dbReference>
<dbReference type="PDBsum" id="3VN3"/>
<dbReference type="SMR" id="Q76CE6"/>
<dbReference type="EvolutionaryTrace" id="Q76CE6"/>
<dbReference type="InterPro" id="IPR021884">
    <property type="entry name" value="Ice-bd_prot"/>
</dbReference>
<dbReference type="Pfam" id="PF11999">
    <property type="entry name" value="Ice_binding"/>
    <property type="match status" value="1"/>
</dbReference>